<dbReference type="EMBL" id="AF332211">
    <property type="protein sequence ID" value="AAK17982.1"/>
    <property type="molecule type" value="mRNA"/>
</dbReference>
<dbReference type="EMBL" id="AL022473">
    <property type="protein sequence ID" value="CAA18549.2"/>
    <property type="molecule type" value="Genomic_DNA"/>
</dbReference>
<dbReference type="EMBL" id="Z82259">
    <property type="protein sequence ID" value="CAA18549.2"/>
    <property type="status" value="JOINED"/>
    <property type="molecule type" value="Genomic_DNA"/>
</dbReference>
<dbReference type="EMBL" id="AL022473">
    <property type="protein sequence ID" value="CAJ43448.1"/>
    <property type="molecule type" value="Genomic_DNA"/>
</dbReference>
<dbReference type="PIR" id="T23126">
    <property type="entry name" value="T23126"/>
</dbReference>
<dbReference type="RefSeq" id="NP_001040954.1">
    <molecule id="Q9BJK5-1"/>
    <property type="nucleotide sequence ID" value="NM_001047489.5"/>
</dbReference>
<dbReference type="RefSeq" id="NP_001040955.1">
    <property type="nucleotide sequence ID" value="NM_001047490.2"/>
</dbReference>
<dbReference type="RefSeq" id="NP_001379453.1">
    <molecule id="Q9BJK5-2"/>
    <property type="nucleotide sequence ID" value="NM_001392373.1"/>
</dbReference>
<dbReference type="SMR" id="Q9BJK5"/>
<dbReference type="BioGRID" id="42914">
    <property type="interactions" value="1"/>
</dbReference>
<dbReference type="FunCoup" id="Q9BJK5">
    <property type="interactions" value="1397"/>
</dbReference>
<dbReference type="IntAct" id="Q9BJK5">
    <property type="interactions" value="1"/>
</dbReference>
<dbReference type="STRING" id="6239.H27C11.1a.1"/>
<dbReference type="PaxDb" id="6239-H27C11.1a"/>
<dbReference type="EnsemblMetazoa" id="H27C11.1a.1">
    <molecule id="Q9BJK5-1"/>
    <property type="protein sequence ID" value="H27C11.1a.1"/>
    <property type="gene ID" value="WBGene00003687"/>
</dbReference>
<dbReference type="EnsemblMetazoa" id="H27C11.1a.2">
    <molecule id="Q9BJK5-1"/>
    <property type="protein sequence ID" value="H27C11.1a.2"/>
    <property type="gene ID" value="WBGene00003687"/>
</dbReference>
<dbReference type="EnsemblMetazoa" id="H27C11.1b.1">
    <molecule id="Q9BJK5-2"/>
    <property type="protein sequence ID" value="H27C11.1b.1"/>
    <property type="gene ID" value="WBGene00003687"/>
</dbReference>
<dbReference type="EnsemblMetazoa" id="H27C11.1b.2">
    <molecule id="Q9BJK5-2"/>
    <property type="protein sequence ID" value="H27C11.1b.2"/>
    <property type="gene ID" value="WBGene00003687"/>
</dbReference>
<dbReference type="GeneID" id="177810"/>
<dbReference type="KEGG" id="cel:CELE_H27C11.1"/>
<dbReference type="UCSC" id="H27C11.1a">
    <molecule id="Q9BJK5-1"/>
    <property type="organism name" value="c. elegans"/>
</dbReference>
<dbReference type="AGR" id="WB:WBGene00003687"/>
<dbReference type="CTD" id="177810"/>
<dbReference type="WormBase" id="H27C11.1a">
    <molecule id="Q9BJK5-1"/>
    <property type="protein sequence ID" value="CE31027"/>
    <property type="gene ID" value="WBGene00003687"/>
    <property type="gene designation" value="nhr-97"/>
</dbReference>
<dbReference type="WormBase" id="H27C11.1b">
    <molecule id="Q9BJK5-2"/>
    <property type="protein sequence ID" value="CE39262"/>
    <property type="gene ID" value="WBGene00003687"/>
    <property type="gene designation" value="nhr-97"/>
</dbReference>
<dbReference type="eggNOG" id="KOG3575">
    <property type="taxonomic scope" value="Eukaryota"/>
</dbReference>
<dbReference type="GeneTree" id="ENSGT00940000153391"/>
<dbReference type="HOGENOM" id="CLU_007368_3_3_1"/>
<dbReference type="InParanoid" id="Q9BJK5"/>
<dbReference type="OMA" id="VHHTNDK"/>
<dbReference type="OrthoDB" id="5771769at2759"/>
<dbReference type="PhylomeDB" id="Q9BJK5"/>
<dbReference type="PRO" id="PR:Q9BJK5"/>
<dbReference type="Proteomes" id="UP000001940">
    <property type="component" value="Chromosome IV"/>
</dbReference>
<dbReference type="Bgee" id="WBGene00003687">
    <property type="expression patterns" value="Expressed in larva and 3 other cell types or tissues"/>
</dbReference>
<dbReference type="GO" id="GO:0005634">
    <property type="term" value="C:nucleus"/>
    <property type="evidence" value="ECO:0007669"/>
    <property type="project" value="UniProtKB-SubCell"/>
</dbReference>
<dbReference type="GO" id="GO:0003700">
    <property type="term" value="F:DNA-binding transcription factor activity"/>
    <property type="evidence" value="ECO:0007669"/>
    <property type="project" value="InterPro"/>
</dbReference>
<dbReference type="GO" id="GO:0000978">
    <property type="term" value="F:RNA polymerase II cis-regulatory region sequence-specific DNA binding"/>
    <property type="evidence" value="ECO:0007669"/>
    <property type="project" value="InterPro"/>
</dbReference>
<dbReference type="GO" id="GO:0008270">
    <property type="term" value="F:zinc ion binding"/>
    <property type="evidence" value="ECO:0007669"/>
    <property type="project" value="UniProtKB-KW"/>
</dbReference>
<dbReference type="CDD" id="cd06960">
    <property type="entry name" value="NR_DBD_HNF4A"/>
    <property type="match status" value="1"/>
</dbReference>
<dbReference type="Gene3D" id="3.30.50.10">
    <property type="entry name" value="Erythroid Transcription Factor GATA-1, subunit A"/>
    <property type="match status" value="1"/>
</dbReference>
<dbReference type="Gene3D" id="1.10.565.10">
    <property type="entry name" value="Retinoid X Receptor"/>
    <property type="match status" value="1"/>
</dbReference>
<dbReference type="InterPro" id="IPR049636">
    <property type="entry name" value="HNF4-like_DBD"/>
</dbReference>
<dbReference type="InterPro" id="IPR035500">
    <property type="entry name" value="NHR-like_dom_sf"/>
</dbReference>
<dbReference type="InterPro" id="IPR000536">
    <property type="entry name" value="Nucl_hrmn_rcpt_lig-bd"/>
</dbReference>
<dbReference type="InterPro" id="IPR001723">
    <property type="entry name" value="Nuclear_hrmn_rcpt"/>
</dbReference>
<dbReference type="InterPro" id="IPR052496">
    <property type="entry name" value="Orphan_Nuclear_Rcpt"/>
</dbReference>
<dbReference type="InterPro" id="IPR001628">
    <property type="entry name" value="Znf_hrmn_rcpt"/>
</dbReference>
<dbReference type="InterPro" id="IPR013088">
    <property type="entry name" value="Znf_NHR/GATA"/>
</dbReference>
<dbReference type="PANTHER" id="PTHR47519">
    <property type="entry name" value="NUCLEAR HORMONE RECEPTOR FAMILY MEMBER NHR-31-RELATED"/>
    <property type="match status" value="1"/>
</dbReference>
<dbReference type="PANTHER" id="PTHR47519:SF2">
    <property type="entry name" value="NUCLEAR HORMONE RECEPTOR FAMILY MEMBER NHR-97"/>
    <property type="match status" value="1"/>
</dbReference>
<dbReference type="Pfam" id="PF00104">
    <property type="entry name" value="Hormone_recep"/>
    <property type="match status" value="1"/>
</dbReference>
<dbReference type="Pfam" id="PF00105">
    <property type="entry name" value="zf-C4"/>
    <property type="match status" value="1"/>
</dbReference>
<dbReference type="PRINTS" id="PR00398">
    <property type="entry name" value="STRDHORMONER"/>
</dbReference>
<dbReference type="PRINTS" id="PR00047">
    <property type="entry name" value="STROIDFINGER"/>
</dbReference>
<dbReference type="SMART" id="SM00430">
    <property type="entry name" value="HOLI"/>
    <property type="match status" value="1"/>
</dbReference>
<dbReference type="SMART" id="SM00399">
    <property type="entry name" value="ZnF_C4"/>
    <property type="match status" value="1"/>
</dbReference>
<dbReference type="SUPFAM" id="SSF57716">
    <property type="entry name" value="Glucocorticoid receptor-like (DNA-binding domain)"/>
    <property type="match status" value="1"/>
</dbReference>
<dbReference type="SUPFAM" id="SSF48508">
    <property type="entry name" value="Nuclear receptor ligand-binding domain"/>
    <property type="match status" value="1"/>
</dbReference>
<dbReference type="PROSITE" id="PS51843">
    <property type="entry name" value="NR_LBD"/>
    <property type="match status" value="1"/>
</dbReference>
<dbReference type="PROSITE" id="PS00031">
    <property type="entry name" value="NUCLEAR_REC_DBD_1"/>
    <property type="match status" value="1"/>
</dbReference>
<dbReference type="PROSITE" id="PS51030">
    <property type="entry name" value="NUCLEAR_REC_DBD_2"/>
    <property type="match status" value="1"/>
</dbReference>
<protein>
    <recommendedName>
        <fullName>Nuclear hormone receptor family member nhr-97</fullName>
    </recommendedName>
</protein>
<keyword id="KW-0025">Alternative splicing</keyword>
<keyword id="KW-0238">DNA-binding</keyword>
<keyword id="KW-0479">Metal-binding</keyword>
<keyword id="KW-0539">Nucleus</keyword>
<keyword id="KW-0675">Receptor</keyword>
<keyword id="KW-1185">Reference proteome</keyword>
<keyword id="KW-0804">Transcription</keyword>
<keyword id="KW-0805">Transcription regulation</keyword>
<keyword id="KW-0862">Zinc</keyword>
<keyword id="KW-0863">Zinc-finger</keyword>
<comment type="function">
    <text>Orphan nuclear receptor.</text>
</comment>
<comment type="subcellular location">
    <subcellularLocation>
        <location evidence="1">Nucleus</location>
    </subcellularLocation>
</comment>
<comment type="alternative products">
    <event type="alternative splicing"/>
    <isoform>
        <id>Q9BJK5-1</id>
        <name>a</name>
        <sequence type="displayed"/>
    </isoform>
    <isoform>
        <id>Q9BJK5-2</id>
        <name>b</name>
        <sequence type="described" ref="VSP_020169"/>
    </isoform>
</comment>
<comment type="similarity">
    <text evidence="4">Belongs to the nuclear hormone receptor family.</text>
</comment>
<organism>
    <name type="scientific">Caenorhabditis elegans</name>
    <dbReference type="NCBI Taxonomy" id="6239"/>
    <lineage>
        <taxon>Eukaryota</taxon>
        <taxon>Metazoa</taxon>
        <taxon>Ecdysozoa</taxon>
        <taxon>Nematoda</taxon>
        <taxon>Chromadorea</taxon>
        <taxon>Rhabditida</taxon>
        <taxon>Rhabditina</taxon>
        <taxon>Rhabditomorpha</taxon>
        <taxon>Rhabditoidea</taxon>
        <taxon>Rhabditidae</taxon>
        <taxon>Peloderinae</taxon>
        <taxon>Caenorhabditis</taxon>
    </lineage>
</organism>
<name>NHR97_CAEEL</name>
<proteinExistence type="evidence at transcript level"/>
<evidence type="ECO:0000255" key="1">
    <source>
        <dbReference type="PROSITE-ProRule" id="PRU00407"/>
    </source>
</evidence>
<evidence type="ECO:0000255" key="2">
    <source>
        <dbReference type="PROSITE-ProRule" id="PRU01189"/>
    </source>
</evidence>
<evidence type="ECO:0000256" key="3">
    <source>
        <dbReference type="SAM" id="MobiDB-lite"/>
    </source>
</evidence>
<evidence type="ECO:0000305" key="4"/>
<feature type="chain" id="PRO_0000053801" description="Nuclear hormone receptor family member nhr-97">
    <location>
        <begin position="1"/>
        <end position="439"/>
    </location>
</feature>
<feature type="domain" description="NR LBD" evidence="2">
    <location>
        <begin position="173"/>
        <end position="408"/>
    </location>
</feature>
<feature type="DNA-binding region" description="Nuclear receptor" evidence="1">
    <location>
        <begin position="32"/>
        <end position="108"/>
    </location>
</feature>
<feature type="zinc finger region" description="NR C4-type" evidence="1">
    <location>
        <begin position="35"/>
        <end position="56"/>
    </location>
</feature>
<feature type="zinc finger region" description="NR C4-type" evidence="1">
    <location>
        <begin position="72"/>
        <end position="96"/>
    </location>
</feature>
<feature type="region of interest" description="Disordered" evidence="3">
    <location>
        <begin position="1"/>
        <end position="22"/>
    </location>
</feature>
<feature type="region of interest" description="Disordered" evidence="3">
    <location>
        <begin position="112"/>
        <end position="135"/>
    </location>
</feature>
<feature type="compositionally biased region" description="Polar residues" evidence="3">
    <location>
        <begin position="1"/>
        <end position="13"/>
    </location>
</feature>
<feature type="splice variant" id="VSP_020169" description="In isoform b." evidence="4">
    <location>
        <begin position="1"/>
        <end position="100"/>
    </location>
</feature>
<accession>Q9BJK5</accession>
<accession>Q2YS47</accession>
<accession>Q9XXL0</accession>
<reference key="1">
    <citation type="journal article" date="2005" name="J. Mol. Evol.">
        <title>Explosive lineage-specific expansion of the orphan nuclear receptor HNF4 in nematodes.</title>
        <authorList>
            <person name="Robinson-Rechavi M."/>
            <person name="Maina C.V."/>
            <person name="Gissendanner C.R."/>
            <person name="Laudet V."/>
            <person name="Sluder A."/>
        </authorList>
    </citation>
    <scope>NUCLEOTIDE SEQUENCE [MRNA] (ISOFORM A)</scope>
</reference>
<reference key="2">
    <citation type="journal article" date="1998" name="Science">
        <title>Genome sequence of the nematode C. elegans: a platform for investigating biology.</title>
        <authorList>
            <consortium name="The C. elegans sequencing consortium"/>
        </authorList>
    </citation>
    <scope>NUCLEOTIDE SEQUENCE [LARGE SCALE GENOMIC DNA]</scope>
    <scope>ALTERNATIVE SPLICING</scope>
    <source>
        <strain>Bristol N2</strain>
    </source>
</reference>
<gene>
    <name type="primary">nhr-97</name>
    <name type="ORF">H27C11.1</name>
</gene>
<sequence length="439" mass="49018">MSGDAQPSSNQRATEARPPPSPPLVNEKAAIGALCVVCGDRACSHLYYGVAACHGCKCFFWRTVKSRLNYVCRYGGNCSISTAGRNACRYCRFHRCLFVGMKIEAVKMDRKLTKRKKEKTDEDDTDDGGSHESFETTTDAKRAKFDNSLLISSLQLIDKTSSAGNAKLSTLHFVQPSLQNLLDEPELLDGFRSEMSYRATRQADEQLCYDSERRLVTWAIDWCRQTAEIADVHHTNDKISLLRASCAPLVLLELGCQSSFGPSDTQIPFCNNSFLSAHCIPPSTSFLRWKTIQSLNKWAQRELKPLCLRAKEIVLLKALIALNPDANGLSSDAESSIRMLRERVHTALFQLLMENSEPITAASRLAQILLLIPQLSLMGVDVIEQVKVRNTFNKRSAFGEGLLFWQLYGDIFDDANDDSYLEHSASCSPTDSQYTTDSI</sequence>